<evidence type="ECO:0000250" key="1"/>
<evidence type="ECO:0000305" key="2"/>
<name>Y2196_STAAS</name>
<gene>
    <name type="ordered locus">SAS2196</name>
</gene>
<feature type="chain" id="PRO_0000312187" description="Putative 2-hydroxyacid dehydrogenase SAS2196">
    <location>
        <begin position="1"/>
        <end position="317"/>
    </location>
</feature>
<feature type="active site" evidence="1">
    <location>
        <position position="236"/>
    </location>
</feature>
<feature type="active site" evidence="1">
    <location>
        <position position="265"/>
    </location>
</feature>
<feature type="active site" description="Proton donor" evidence="1">
    <location>
        <position position="283"/>
    </location>
</feature>
<feature type="binding site" evidence="1">
    <location>
        <begin position="155"/>
        <end position="156"/>
    </location>
    <ligand>
        <name>NAD(+)</name>
        <dbReference type="ChEBI" id="CHEBI:57540"/>
    </ligand>
</feature>
<feature type="binding site" evidence="1">
    <location>
        <begin position="234"/>
        <end position="236"/>
    </location>
    <ligand>
        <name>NAD(+)</name>
        <dbReference type="ChEBI" id="CHEBI:57540"/>
    </ligand>
</feature>
<feature type="binding site" evidence="1">
    <location>
        <position position="260"/>
    </location>
    <ligand>
        <name>NAD(+)</name>
        <dbReference type="ChEBI" id="CHEBI:57540"/>
    </ligand>
</feature>
<feature type="binding site" evidence="1">
    <location>
        <begin position="283"/>
        <end position="286"/>
    </location>
    <ligand>
        <name>NAD(+)</name>
        <dbReference type="ChEBI" id="CHEBI:57540"/>
    </ligand>
</feature>
<sequence length="317" mass="34675">MEKVYVAGAIPEVGLKLLQEHFEVEMYEGKGLVDKDTLIKGVKNATALISLLSTNVDKDVIDAGKDLKIIANYGAGFNNIDIEYAREKSIDVTNTPKASTNATADLTIGLVLAVARRIVEGDQLSRTTGFDGWAPLFFRGREVSGKTIGIIGLGEIGSAVARRARAFDMDVLYTGPNRKEEKEREIGAKYVDLDTLLKNADFITINAAYNPKMHHLIDTEQFKMMKSTAYLINASRGPIVHEQALVQALKDNEIEGAALDVYEFEPDITDDLKSLNNVVLTPHIGNATFEARDMMSKIVANAAISAVQGEKPQFVVN</sequence>
<proteinExistence type="inferred from homology"/>
<comment type="similarity">
    <text evidence="2">Belongs to the D-isomer specific 2-hydroxyacid dehydrogenase family.</text>
</comment>
<accession>Q6G716</accession>
<protein>
    <recommendedName>
        <fullName>Putative 2-hydroxyacid dehydrogenase SAS2196</fullName>
        <ecNumber>1.1.1.-</ecNumber>
    </recommendedName>
</protein>
<reference key="1">
    <citation type="journal article" date="2004" name="Proc. Natl. Acad. Sci. U.S.A.">
        <title>Complete genomes of two clinical Staphylococcus aureus strains: evidence for the rapid evolution of virulence and drug resistance.</title>
        <authorList>
            <person name="Holden M.T.G."/>
            <person name="Feil E.J."/>
            <person name="Lindsay J.A."/>
            <person name="Peacock S.J."/>
            <person name="Day N.P.J."/>
            <person name="Enright M.C."/>
            <person name="Foster T.J."/>
            <person name="Moore C.E."/>
            <person name="Hurst L."/>
            <person name="Atkin R."/>
            <person name="Barron A."/>
            <person name="Bason N."/>
            <person name="Bentley S.D."/>
            <person name="Chillingworth C."/>
            <person name="Chillingworth T."/>
            <person name="Churcher C."/>
            <person name="Clark L."/>
            <person name="Corton C."/>
            <person name="Cronin A."/>
            <person name="Doggett J."/>
            <person name="Dowd L."/>
            <person name="Feltwell T."/>
            <person name="Hance Z."/>
            <person name="Harris B."/>
            <person name="Hauser H."/>
            <person name="Holroyd S."/>
            <person name="Jagels K."/>
            <person name="James K.D."/>
            <person name="Lennard N."/>
            <person name="Line A."/>
            <person name="Mayes R."/>
            <person name="Moule S."/>
            <person name="Mungall K."/>
            <person name="Ormond D."/>
            <person name="Quail M.A."/>
            <person name="Rabbinowitsch E."/>
            <person name="Rutherford K.M."/>
            <person name="Sanders M."/>
            <person name="Sharp S."/>
            <person name="Simmonds M."/>
            <person name="Stevens K."/>
            <person name="Whitehead S."/>
            <person name="Barrell B.G."/>
            <person name="Spratt B.G."/>
            <person name="Parkhill J."/>
        </authorList>
    </citation>
    <scope>NUCLEOTIDE SEQUENCE [LARGE SCALE GENOMIC DNA]</scope>
    <source>
        <strain>MSSA476</strain>
    </source>
</reference>
<keyword id="KW-0520">NAD</keyword>
<keyword id="KW-0560">Oxidoreductase</keyword>
<dbReference type="EC" id="1.1.1.-"/>
<dbReference type="EMBL" id="BX571857">
    <property type="protein sequence ID" value="CAG44007.1"/>
    <property type="molecule type" value="Genomic_DNA"/>
</dbReference>
<dbReference type="RefSeq" id="WP_000417016.1">
    <property type="nucleotide sequence ID" value="NC_002953.3"/>
</dbReference>
<dbReference type="SMR" id="Q6G716"/>
<dbReference type="KEGG" id="sas:SAS2196"/>
<dbReference type="HOGENOM" id="CLU_019796_1_2_9"/>
<dbReference type="GO" id="GO:0051287">
    <property type="term" value="F:NAD binding"/>
    <property type="evidence" value="ECO:0007669"/>
    <property type="project" value="InterPro"/>
</dbReference>
<dbReference type="GO" id="GO:0016616">
    <property type="term" value="F:oxidoreductase activity, acting on the CH-OH group of donors, NAD or NADP as acceptor"/>
    <property type="evidence" value="ECO:0007669"/>
    <property type="project" value="InterPro"/>
</dbReference>
<dbReference type="CDD" id="cd12178">
    <property type="entry name" value="2-Hacid_dh_13"/>
    <property type="match status" value="1"/>
</dbReference>
<dbReference type="FunFam" id="3.40.50.720:FF:000462">
    <property type="entry name" value="Glyoxylate reductase (NADP+)"/>
    <property type="match status" value="1"/>
</dbReference>
<dbReference type="Gene3D" id="3.40.50.720">
    <property type="entry name" value="NAD(P)-binding Rossmann-like Domain"/>
    <property type="match status" value="2"/>
</dbReference>
<dbReference type="InterPro" id="IPR050857">
    <property type="entry name" value="D-2-hydroxyacid_DH"/>
</dbReference>
<dbReference type="InterPro" id="IPR006139">
    <property type="entry name" value="D-isomer_2_OHA_DH_cat_dom"/>
</dbReference>
<dbReference type="InterPro" id="IPR006140">
    <property type="entry name" value="D-isomer_DH_NAD-bd"/>
</dbReference>
<dbReference type="InterPro" id="IPR036291">
    <property type="entry name" value="NAD(P)-bd_dom_sf"/>
</dbReference>
<dbReference type="PANTHER" id="PTHR42789">
    <property type="entry name" value="D-ISOMER SPECIFIC 2-HYDROXYACID DEHYDROGENASE FAMILY PROTEIN (AFU_ORTHOLOGUE AFUA_6G10090)"/>
    <property type="match status" value="1"/>
</dbReference>
<dbReference type="PANTHER" id="PTHR42789:SF1">
    <property type="entry name" value="D-ISOMER SPECIFIC 2-HYDROXYACID DEHYDROGENASE FAMILY PROTEIN (AFU_ORTHOLOGUE AFUA_6G10090)"/>
    <property type="match status" value="1"/>
</dbReference>
<dbReference type="Pfam" id="PF00389">
    <property type="entry name" value="2-Hacid_dh"/>
    <property type="match status" value="1"/>
</dbReference>
<dbReference type="Pfam" id="PF02826">
    <property type="entry name" value="2-Hacid_dh_C"/>
    <property type="match status" value="1"/>
</dbReference>
<dbReference type="SUPFAM" id="SSF52283">
    <property type="entry name" value="Formate/glycerate dehydrogenase catalytic domain-like"/>
    <property type="match status" value="1"/>
</dbReference>
<dbReference type="SUPFAM" id="SSF51735">
    <property type="entry name" value="NAD(P)-binding Rossmann-fold domains"/>
    <property type="match status" value="1"/>
</dbReference>
<organism>
    <name type="scientific">Staphylococcus aureus (strain MSSA476)</name>
    <dbReference type="NCBI Taxonomy" id="282459"/>
    <lineage>
        <taxon>Bacteria</taxon>
        <taxon>Bacillati</taxon>
        <taxon>Bacillota</taxon>
        <taxon>Bacilli</taxon>
        <taxon>Bacillales</taxon>
        <taxon>Staphylococcaceae</taxon>
        <taxon>Staphylococcus</taxon>
    </lineage>
</organism>